<sequence>MTERVVLAYSGGLDTSVAIGWIGAETGAEVVALAVDVGQGGEDLEAIRQRALTCGAVESIVVDARTEFAESFVAPAIRSNALYMDRYPLISSLSRPIIVKHLVEAAREHGADAIAHGCTGKGNDQVRFEVGVSALAPGLKVLAPVRDSGMTRDKAIAFAEERGLPIDVSKRSPYSIDQNLWGRTAECGILEDPWAQPPEDVFVYSADPTVARTPDEVTISFTDGVPTGLDGRSLSLAELVAELNTRAGAHGVGRIDMIEDRLVGIKSREIYECPAAITLLTAHRDLEDLTLERDVARFKRGVDQRWGEIVYDGLWYSPLKAALDAFVDAASAGVDGDVRLRLAGGVAQVVGRRSPGSLYDHALATYDAGDQFDQGDARGFIELWGLPTKVWAAREQRLNP</sequence>
<accession>Q0RFB2</accession>
<proteinExistence type="inferred from homology"/>
<gene>
    <name evidence="1" type="primary">argG</name>
    <name type="ordered locus">FRAAL5202</name>
</gene>
<dbReference type="EC" id="6.3.4.5" evidence="1"/>
<dbReference type="EMBL" id="CT573213">
    <property type="protein sequence ID" value="CAJ63835.1"/>
    <property type="molecule type" value="Genomic_DNA"/>
</dbReference>
<dbReference type="RefSeq" id="WP_011606296.1">
    <property type="nucleotide sequence ID" value="NC_008278.1"/>
</dbReference>
<dbReference type="SMR" id="Q0RFB2"/>
<dbReference type="STRING" id="326424.FRAAL5202"/>
<dbReference type="KEGG" id="fal:FRAAL5202"/>
<dbReference type="eggNOG" id="COG0137">
    <property type="taxonomic scope" value="Bacteria"/>
</dbReference>
<dbReference type="HOGENOM" id="CLU_032784_4_2_11"/>
<dbReference type="OrthoDB" id="9801641at2"/>
<dbReference type="UniPathway" id="UPA00068">
    <property type="reaction ID" value="UER00113"/>
</dbReference>
<dbReference type="Proteomes" id="UP000000657">
    <property type="component" value="Chromosome"/>
</dbReference>
<dbReference type="GO" id="GO:0005737">
    <property type="term" value="C:cytoplasm"/>
    <property type="evidence" value="ECO:0007669"/>
    <property type="project" value="UniProtKB-SubCell"/>
</dbReference>
<dbReference type="GO" id="GO:0004055">
    <property type="term" value="F:argininosuccinate synthase activity"/>
    <property type="evidence" value="ECO:0007669"/>
    <property type="project" value="UniProtKB-UniRule"/>
</dbReference>
<dbReference type="GO" id="GO:0005524">
    <property type="term" value="F:ATP binding"/>
    <property type="evidence" value="ECO:0007669"/>
    <property type="project" value="UniProtKB-UniRule"/>
</dbReference>
<dbReference type="GO" id="GO:0000053">
    <property type="term" value="P:argininosuccinate metabolic process"/>
    <property type="evidence" value="ECO:0007669"/>
    <property type="project" value="TreeGrafter"/>
</dbReference>
<dbReference type="GO" id="GO:0006526">
    <property type="term" value="P:L-arginine biosynthetic process"/>
    <property type="evidence" value="ECO:0007669"/>
    <property type="project" value="UniProtKB-UniRule"/>
</dbReference>
<dbReference type="GO" id="GO:0000050">
    <property type="term" value="P:urea cycle"/>
    <property type="evidence" value="ECO:0007669"/>
    <property type="project" value="TreeGrafter"/>
</dbReference>
<dbReference type="CDD" id="cd01999">
    <property type="entry name" value="ASS"/>
    <property type="match status" value="1"/>
</dbReference>
<dbReference type="FunFam" id="3.40.50.620:FF:000038">
    <property type="entry name" value="Argininosuccinate synthase"/>
    <property type="match status" value="1"/>
</dbReference>
<dbReference type="FunFam" id="3.90.1260.10:FF:000007">
    <property type="entry name" value="Argininosuccinate synthase"/>
    <property type="match status" value="1"/>
</dbReference>
<dbReference type="Gene3D" id="3.90.1260.10">
    <property type="entry name" value="Argininosuccinate synthetase, chain A, domain 2"/>
    <property type="match status" value="1"/>
</dbReference>
<dbReference type="Gene3D" id="3.40.50.620">
    <property type="entry name" value="HUPs"/>
    <property type="match status" value="1"/>
</dbReference>
<dbReference type="Gene3D" id="1.20.5.470">
    <property type="entry name" value="Single helix bin"/>
    <property type="match status" value="1"/>
</dbReference>
<dbReference type="HAMAP" id="MF_00005">
    <property type="entry name" value="Arg_succ_synth_type1"/>
    <property type="match status" value="1"/>
</dbReference>
<dbReference type="InterPro" id="IPR048268">
    <property type="entry name" value="Arginosuc_syn_C"/>
</dbReference>
<dbReference type="InterPro" id="IPR048267">
    <property type="entry name" value="Arginosuc_syn_N"/>
</dbReference>
<dbReference type="InterPro" id="IPR001518">
    <property type="entry name" value="Arginosuc_synth"/>
</dbReference>
<dbReference type="InterPro" id="IPR018223">
    <property type="entry name" value="Arginosuc_synth_CS"/>
</dbReference>
<dbReference type="InterPro" id="IPR023434">
    <property type="entry name" value="Arginosuc_synth_type_1_subfam"/>
</dbReference>
<dbReference type="InterPro" id="IPR024074">
    <property type="entry name" value="AS_cat/multimer_dom_body"/>
</dbReference>
<dbReference type="InterPro" id="IPR014729">
    <property type="entry name" value="Rossmann-like_a/b/a_fold"/>
</dbReference>
<dbReference type="NCBIfam" id="TIGR00032">
    <property type="entry name" value="argG"/>
    <property type="match status" value="1"/>
</dbReference>
<dbReference type="NCBIfam" id="NF001770">
    <property type="entry name" value="PRK00509.1"/>
    <property type="match status" value="1"/>
</dbReference>
<dbReference type="PANTHER" id="PTHR11587">
    <property type="entry name" value="ARGININOSUCCINATE SYNTHASE"/>
    <property type="match status" value="1"/>
</dbReference>
<dbReference type="PANTHER" id="PTHR11587:SF2">
    <property type="entry name" value="ARGININOSUCCINATE SYNTHASE"/>
    <property type="match status" value="1"/>
</dbReference>
<dbReference type="Pfam" id="PF20979">
    <property type="entry name" value="Arginosuc_syn_C"/>
    <property type="match status" value="1"/>
</dbReference>
<dbReference type="Pfam" id="PF00764">
    <property type="entry name" value="Arginosuc_synth"/>
    <property type="match status" value="1"/>
</dbReference>
<dbReference type="SUPFAM" id="SSF52402">
    <property type="entry name" value="Adenine nucleotide alpha hydrolases-like"/>
    <property type="match status" value="1"/>
</dbReference>
<dbReference type="SUPFAM" id="SSF69864">
    <property type="entry name" value="Argininosuccinate synthetase, C-terminal domain"/>
    <property type="match status" value="1"/>
</dbReference>
<dbReference type="PROSITE" id="PS00564">
    <property type="entry name" value="ARGININOSUCCIN_SYN_1"/>
    <property type="match status" value="1"/>
</dbReference>
<dbReference type="PROSITE" id="PS00565">
    <property type="entry name" value="ARGININOSUCCIN_SYN_2"/>
    <property type="match status" value="1"/>
</dbReference>
<feature type="chain" id="PRO_1000000396" description="Argininosuccinate synthase">
    <location>
        <begin position="1"/>
        <end position="400"/>
    </location>
</feature>
<feature type="binding site" evidence="1">
    <location>
        <begin position="8"/>
        <end position="16"/>
    </location>
    <ligand>
        <name>ATP</name>
        <dbReference type="ChEBI" id="CHEBI:30616"/>
    </ligand>
</feature>
<feature type="binding site" evidence="1">
    <location>
        <position position="87"/>
    </location>
    <ligand>
        <name>L-citrulline</name>
        <dbReference type="ChEBI" id="CHEBI:57743"/>
    </ligand>
</feature>
<feature type="binding site" evidence="1">
    <location>
        <position position="92"/>
    </location>
    <ligand>
        <name>L-citrulline</name>
        <dbReference type="ChEBI" id="CHEBI:57743"/>
    </ligand>
</feature>
<feature type="binding site" evidence="1">
    <location>
        <position position="117"/>
    </location>
    <ligand>
        <name>ATP</name>
        <dbReference type="ChEBI" id="CHEBI:30616"/>
    </ligand>
</feature>
<feature type="binding site" evidence="1">
    <location>
        <position position="119"/>
    </location>
    <ligand>
        <name>L-aspartate</name>
        <dbReference type="ChEBI" id="CHEBI:29991"/>
    </ligand>
</feature>
<feature type="binding site" evidence="1">
    <location>
        <position position="123"/>
    </location>
    <ligand>
        <name>L-aspartate</name>
        <dbReference type="ChEBI" id="CHEBI:29991"/>
    </ligand>
</feature>
<feature type="binding site" evidence="1">
    <location>
        <position position="123"/>
    </location>
    <ligand>
        <name>L-citrulline</name>
        <dbReference type="ChEBI" id="CHEBI:57743"/>
    </ligand>
</feature>
<feature type="binding site" evidence="1">
    <location>
        <position position="124"/>
    </location>
    <ligand>
        <name>L-aspartate</name>
        <dbReference type="ChEBI" id="CHEBI:29991"/>
    </ligand>
</feature>
<feature type="binding site" evidence="1">
    <location>
        <position position="127"/>
    </location>
    <ligand>
        <name>L-citrulline</name>
        <dbReference type="ChEBI" id="CHEBI:57743"/>
    </ligand>
</feature>
<feature type="binding site" evidence="1">
    <location>
        <position position="175"/>
    </location>
    <ligand>
        <name>L-citrulline</name>
        <dbReference type="ChEBI" id="CHEBI:57743"/>
    </ligand>
</feature>
<feature type="binding site" evidence="1">
    <location>
        <position position="259"/>
    </location>
    <ligand>
        <name>L-citrulline</name>
        <dbReference type="ChEBI" id="CHEBI:57743"/>
    </ligand>
</feature>
<feature type="binding site" evidence="1">
    <location>
        <position position="271"/>
    </location>
    <ligand>
        <name>L-citrulline</name>
        <dbReference type="ChEBI" id="CHEBI:57743"/>
    </ligand>
</feature>
<comment type="catalytic activity">
    <reaction evidence="1">
        <text>L-citrulline + L-aspartate + ATP = 2-(N(omega)-L-arginino)succinate + AMP + diphosphate + H(+)</text>
        <dbReference type="Rhea" id="RHEA:10932"/>
        <dbReference type="ChEBI" id="CHEBI:15378"/>
        <dbReference type="ChEBI" id="CHEBI:29991"/>
        <dbReference type="ChEBI" id="CHEBI:30616"/>
        <dbReference type="ChEBI" id="CHEBI:33019"/>
        <dbReference type="ChEBI" id="CHEBI:57472"/>
        <dbReference type="ChEBI" id="CHEBI:57743"/>
        <dbReference type="ChEBI" id="CHEBI:456215"/>
        <dbReference type="EC" id="6.3.4.5"/>
    </reaction>
</comment>
<comment type="pathway">
    <text evidence="1">Amino-acid biosynthesis; L-arginine biosynthesis; L-arginine from L-ornithine and carbamoyl phosphate: step 2/3.</text>
</comment>
<comment type="subunit">
    <text evidence="1">Homotetramer.</text>
</comment>
<comment type="subcellular location">
    <subcellularLocation>
        <location evidence="1">Cytoplasm</location>
    </subcellularLocation>
</comment>
<comment type="similarity">
    <text evidence="1">Belongs to the argininosuccinate synthase family. Type 1 subfamily.</text>
</comment>
<keyword id="KW-0028">Amino-acid biosynthesis</keyword>
<keyword id="KW-0055">Arginine biosynthesis</keyword>
<keyword id="KW-0067">ATP-binding</keyword>
<keyword id="KW-0963">Cytoplasm</keyword>
<keyword id="KW-0436">Ligase</keyword>
<keyword id="KW-0547">Nucleotide-binding</keyword>
<keyword id="KW-1185">Reference proteome</keyword>
<reference key="1">
    <citation type="journal article" date="2007" name="Genome Res.">
        <title>Genome characteristics of facultatively symbiotic Frankia sp. strains reflect host range and host plant biogeography.</title>
        <authorList>
            <person name="Normand P."/>
            <person name="Lapierre P."/>
            <person name="Tisa L.S."/>
            <person name="Gogarten J.P."/>
            <person name="Alloisio N."/>
            <person name="Bagnarol E."/>
            <person name="Bassi C.A."/>
            <person name="Berry A.M."/>
            <person name="Bickhart D.M."/>
            <person name="Choisne N."/>
            <person name="Couloux A."/>
            <person name="Cournoyer B."/>
            <person name="Cruveiller S."/>
            <person name="Daubin V."/>
            <person name="Demange N."/>
            <person name="Francino M.P."/>
            <person name="Goltsman E."/>
            <person name="Huang Y."/>
            <person name="Kopp O.R."/>
            <person name="Labarre L."/>
            <person name="Lapidus A."/>
            <person name="Lavire C."/>
            <person name="Marechal J."/>
            <person name="Martinez M."/>
            <person name="Mastronunzio J.E."/>
            <person name="Mullin B.C."/>
            <person name="Niemann J."/>
            <person name="Pujic P."/>
            <person name="Rawnsley T."/>
            <person name="Rouy Z."/>
            <person name="Schenowitz C."/>
            <person name="Sellstedt A."/>
            <person name="Tavares F."/>
            <person name="Tomkins J.P."/>
            <person name="Vallenet D."/>
            <person name="Valverde C."/>
            <person name="Wall L.G."/>
            <person name="Wang Y."/>
            <person name="Medigue C."/>
            <person name="Benson D.R."/>
        </authorList>
    </citation>
    <scope>NUCLEOTIDE SEQUENCE [LARGE SCALE GENOMIC DNA]</scope>
    <source>
        <strain>DSM 45986 / CECT 9034 / ACN14a</strain>
    </source>
</reference>
<protein>
    <recommendedName>
        <fullName evidence="1">Argininosuccinate synthase</fullName>
        <ecNumber evidence="1">6.3.4.5</ecNumber>
    </recommendedName>
    <alternativeName>
        <fullName evidence="1">Citrulline--aspartate ligase</fullName>
    </alternativeName>
</protein>
<name>ASSY_FRAAA</name>
<evidence type="ECO:0000255" key="1">
    <source>
        <dbReference type="HAMAP-Rule" id="MF_00005"/>
    </source>
</evidence>
<organism>
    <name type="scientific">Frankia alni (strain DSM 45986 / CECT 9034 / ACN14a)</name>
    <dbReference type="NCBI Taxonomy" id="326424"/>
    <lineage>
        <taxon>Bacteria</taxon>
        <taxon>Bacillati</taxon>
        <taxon>Actinomycetota</taxon>
        <taxon>Actinomycetes</taxon>
        <taxon>Frankiales</taxon>
        <taxon>Frankiaceae</taxon>
        <taxon>Frankia</taxon>
    </lineage>
</organism>